<evidence type="ECO:0000250" key="1">
    <source>
        <dbReference type="UniProtKB" id="Q9VQI9"/>
    </source>
</evidence>
<evidence type="ECO:0000255" key="2"/>
<evidence type="ECO:0000256" key="3">
    <source>
        <dbReference type="SAM" id="MobiDB-lite"/>
    </source>
</evidence>
<evidence type="ECO:0000312" key="4">
    <source>
        <dbReference type="EMBL" id="EDW12041.1"/>
    </source>
</evidence>
<name>AFFL_DROMO</name>
<sequence>MAQQQQQQHQQQQHHQQQQQLLLQQQQQLLQYNNNLYNLNYNMEDNERRKRREREKYERQQGIQSDDRETSLFGEPRRLNPSEGDAEITAALGEFIDARDHMNSSTVGIYRHASTNASSSRLPALSFGGSSLANSYSTSSASVNPAASLASSSASVPGQLPTSQQQQQQQQQQQHYQQQQRAPTYLKQADNKPPYNGRGGYPGQPMKNDIPSSSGMAPPRGPPRSSSSASQSNSNSNSINSSSATNNATSGATSASMSSPLGPPLSTQMPNGREKSFLGPPAPALPNGGRFVPPAASSKRPSNSVGLQPPPPEKDISKIITEMTNNYRVTPLTSIAATPHAPMSENYNLNGPNKFKYAFDSIGPLNSPPAAGASSLMTPLLAPIAPITSPIAPLLTTPPQASQLPLPLAPLAGATTVPPALGGMAAVAPIQQLMPTPPKASPTPPAIKPMKTEKNHSLEKQDSCLENDLELSESDDERKKEGRSAGNSSNSSESDSSESGSEASSKGDTQQQQQQQQQQQQQQLLLQQQQQQQLLLQQQQQRLAASANGSKKKYSQTIIASGANTISGLLTSSGLGGAGAGSVAGGAGGAGGAINATNNTCGGGGGSSGSCMGTMSSSSSSNKTPSPTDSNRWNLSRFFPKPANQTAAESVSPGVANAIGNVSMKVPGILPGGAQIIPESIDVTTAIVKNEKLHDEPRHVGDDEDDEADEQHRQQQQQQQQQQQQQQQQQRYGLSVTVKKEQLEQQQQQQLLLQQQQQLTTEQLALAGALPKNQIKRESRLSDSGSASSGSGSGSSSSDSAGGSSEVLQMPGPGETLQIPGVPAAITTVLRVPQAMQHKVQPNSVTLTPIGPLPASPKPRQKKPRKKKMSAATAPLDSSDEDEPTASSNKKHALELAATAAAAAAAVAVPVAAAAAPAIKKGRGRPRKQAQQQQQQQQQQLQQSGNLSSASASSSQAKGPTLTAAKKPLAKASVSNSNSTAPATVAAGTRKREHSSNSSSNSNTPTKKPTATFATMAAKLDRADALSSDDDSSSSSSCSSTKSSSSSGSDSETPAAAAAGAAASTATTVVTTSAQNPAKKRIVKINKVGVAGNSSSSSKAKRRYSVGSSSNSSSSSETEEQQQHKQQQLLLLQQQQQKQQLQHQQQLQQQQQQQQSLLGQFAAESLPQSAQRLSSSDCSSSSNSDSSSNSSGSSSSSDEDGEHRSGKRKSDKKKICTLTRIFNPKEGGAKKQGQVVIIDQSEEQQQQQQQQQQQAKELKPRATPTQLLGATLASPARTTTPHLTSLMCKIDLSKLARQHHHQPERLKAQQNGHLSSRSAEGARTPKDLQQICTPNGYVGGAAGGGAAASKLLGGVKHEHGVKPEPELEPGYEGKYKLNSVKQEFMLKQELPARRRKRSSSSSSSPYKEKKRKKEKAEQLSKELLPVPVLLPANNHERLSRDKLELLMQQQESAANGSPNKLQQQQQQSRLSQSQQQQQQQQQQQSLSQSTTAAATVAAAPIQLPTTCSEAVQTTPPPAAPQPEPRLIYRSHFDKEEENENDDLRKNDFLLQEAIRRKRAADSERDSFSQMTLYLEAIVYFLLTADAMERCNMEATWTMYKDTLSLIKYISSKNRPYQLSTNGNHESHNIVAILSLRCQSLISLKLYKLRRVNCRAIIASCTEFFRSGRGDILNGNTPSSISPSNSVGSQGSGSNTPPGKIVPQDIHNMLCKQNEYLTYVNSAHELWDQADRLVRNGNHIDFIRKLDHENGPLTLHSTMHEVFRYVQAGLKTLRDAVSYPQSQ</sequence>
<gene>
    <name evidence="1" type="primary">lilli</name>
    <name type="ORF">GI11857</name>
</gene>
<comment type="function">
    <text evidence="1">Has a role in transcriptional regulation. Acts in parallel with the Ras/MAPK and the PI3K/PKB pathways in the control of cell identity and cellular growth. Essential for regulation of the cytoskeleton and cell growth but not for cell proliferation or growth rate. Required specifically for the microtubule-based basal transport of lipid droplets. Plays a partially redundant function downstream of Raf in cell fate specification in the developing eye. Pair-rule protein that regulates embryonic cellularization, gastrulation and segmentation (By similarity).</text>
</comment>
<comment type="subcellular location">
    <subcellularLocation>
        <location evidence="1">Nucleus</location>
    </subcellularLocation>
</comment>
<comment type="similarity">
    <text evidence="2">Belongs to the AF4 family.</text>
</comment>
<proteinExistence type="inferred from homology"/>
<keyword id="KW-0217">Developmental protein</keyword>
<keyword id="KW-0238">DNA-binding</keyword>
<keyword id="KW-0539">Nucleus</keyword>
<keyword id="KW-0562">Pair-rule protein</keyword>
<keyword id="KW-0597">Phosphoprotein</keyword>
<keyword id="KW-1185">Reference proteome</keyword>
<keyword id="KW-0804">Transcription</keyword>
<keyword id="KW-0805">Transcription regulation</keyword>
<accession>B4KFE1</accession>
<feature type="chain" id="PRO_0000394676" description="AF4/FMR2 family member lilli">
    <location>
        <begin position="1"/>
        <end position="1782"/>
    </location>
</feature>
<feature type="DNA-binding region" description="A.T hook" evidence="2">
    <location>
        <begin position="920"/>
        <end position="932"/>
    </location>
</feature>
<feature type="region of interest" description="Disordered" evidence="3">
    <location>
        <begin position="42"/>
        <end position="84"/>
    </location>
</feature>
<feature type="region of interest" description="Disordered" evidence="3">
    <location>
        <begin position="150"/>
        <end position="313"/>
    </location>
</feature>
<feature type="region of interest" description="Disordered" evidence="3">
    <location>
        <begin position="434"/>
        <end position="515"/>
    </location>
</feature>
<feature type="region of interest" description="Disordered" evidence="3">
    <location>
        <begin position="605"/>
        <end position="637"/>
    </location>
</feature>
<feature type="region of interest" description="Disordered" evidence="3">
    <location>
        <begin position="691"/>
        <end position="732"/>
    </location>
</feature>
<feature type="region of interest" description="Disordered" evidence="3">
    <location>
        <begin position="768"/>
        <end position="820"/>
    </location>
</feature>
<feature type="region of interest" description="Disordered" evidence="3">
    <location>
        <begin position="839"/>
        <end position="891"/>
    </location>
</feature>
<feature type="region of interest" description="Disordered" evidence="3">
    <location>
        <begin position="911"/>
        <end position="1064"/>
    </location>
</feature>
<feature type="region of interest" description="Disordered" evidence="3">
    <location>
        <begin position="1091"/>
        <end position="1126"/>
    </location>
</feature>
<feature type="region of interest" description="Disordered" evidence="3">
    <location>
        <begin position="1166"/>
        <end position="1234"/>
    </location>
</feature>
<feature type="region of interest" description="Disordered" evidence="3">
    <location>
        <begin position="1296"/>
        <end position="1327"/>
    </location>
</feature>
<feature type="region of interest" description="Disordered" evidence="3">
    <location>
        <begin position="1386"/>
        <end position="1420"/>
    </location>
</feature>
<feature type="region of interest" description="Disordered" evidence="3">
    <location>
        <begin position="1450"/>
        <end position="1484"/>
    </location>
</feature>
<feature type="region of interest" description="Disordered" evidence="3">
    <location>
        <begin position="1674"/>
        <end position="1701"/>
    </location>
</feature>
<feature type="compositionally biased region" description="Basic and acidic residues" evidence="3">
    <location>
        <begin position="54"/>
        <end position="80"/>
    </location>
</feature>
<feature type="compositionally biased region" description="Low complexity" evidence="3">
    <location>
        <begin position="164"/>
        <end position="180"/>
    </location>
</feature>
<feature type="compositionally biased region" description="Low complexity" evidence="3">
    <location>
        <begin position="211"/>
        <end position="260"/>
    </location>
</feature>
<feature type="compositionally biased region" description="Pro residues" evidence="3">
    <location>
        <begin position="435"/>
        <end position="447"/>
    </location>
</feature>
<feature type="compositionally biased region" description="Basic and acidic residues" evidence="3">
    <location>
        <begin position="450"/>
        <end position="463"/>
    </location>
</feature>
<feature type="compositionally biased region" description="Acidic residues" evidence="3">
    <location>
        <begin position="465"/>
        <end position="475"/>
    </location>
</feature>
<feature type="compositionally biased region" description="Low complexity" evidence="3">
    <location>
        <begin position="484"/>
        <end position="515"/>
    </location>
</feature>
<feature type="compositionally biased region" description="Low complexity" evidence="3">
    <location>
        <begin position="609"/>
        <end position="622"/>
    </location>
</feature>
<feature type="compositionally biased region" description="Polar residues" evidence="3">
    <location>
        <begin position="623"/>
        <end position="634"/>
    </location>
</feature>
<feature type="compositionally biased region" description="Basic and acidic residues" evidence="3">
    <location>
        <begin position="691"/>
        <end position="701"/>
    </location>
</feature>
<feature type="compositionally biased region" description="Low complexity" evidence="3">
    <location>
        <begin position="714"/>
        <end position="730"/>
    </location>
</feature>
<feature type="compositionally biased region" description="Low complexity" evidence="3">
    <location>
        <begin position="782"/>
        <end position="805"/>
    </location>
</feature>
<feature type="compositionally biased region" description="Basic residues" evidence="3">
    <location>
        <begin position="859"/>
        <end position="869"/>
    </location>
</feature>
<feature type="compositionally biased region" description="Low complexity" evidence="3">
    <location>
        <begin position="929"/>
        <end position="972"/>
    </location>
</feature>
<feature type="compositionally biased region" description="Polar residues" evidence="3">
    <location>
        <begin position="973"/>
        <end position="982"/>
    </location>
</feature>
<feature type="compositionally biased region" description="Low complexity" evidence="3">
    <location>
        <begin position="996"/>
        <end position="1018"/>
    </location>
</feature>
<feature type="compositionally biased region" description="Low complexity" evidence="3">
    <location>
        <begin position="1033"/>
        <end position="1064"/>
    </location>
</feature>
<feature type="compositionally biased region" description="Low complexity" evidence="3">
    <location>
        <begin position="1105"/>
        <end position="1116"/>
    </location>
</feature>
<feature type="compositionally biased region" description="Low complexity" evidence="3">
    <location>
        <begin position="1174"/>
        <end position="1196"/>
    </location>
</feature>
<feature type="compositionally biased region" description="Polar residues" evidence="3">
    <location>
        <begin position="1308"/>
        <end position="1318"/>
    </location>
</feature>
<feature type="compositionally biased region" description="Polar residues" evidence="3">
    <location>
        <begin position="1450"/>
        <end position="1460"/>
    </location>
</feature>
<feature type="compositionally biased region" description="Low complexity" evidence="3">
    <location>
        <begin position="1461"/>
        <end position="1484"/>
    </location>
</feature>
<feature type="compositionally biased region" description="Low complexity" evidence="3">
    <location>
        <begin position="1674"/>
        <end position="1694"/>
    </location>
</feature>
<feature type="modified residue" description="Phosphothreonine" evidence="1">
    <location>
        <position position="443"/>
    </location>
</feature>
<feature type="modified residue" description="Phosphoserine" evidence="1">
    <location>
        <position position="472"/>
    </location>
</feature>
<feature type="modified residue" description="Phosphoserine" evidence="1">
    <location>
        <position position="474"/>
    </location>
</feature>
<feature type="modified residue" description="Phosphoserine" evidence="1">
    <location>
        <position position="878"/>
    </location>
</feature>
<feature type="modified residue" description="Phosphoserine" evidence="1">
    <location>
        <position position="879"/>
    </location>
</feature>
<feature type="modified residue" description="Phosphoserine" evidence="1">
    <location>
        <position position="949"/>
    </location>
</feature>
<feature type="modified residue" description="Phosphoserine" evidence="1">
    <location>
        <position position="951"/>
    </location>
</feature>
<feature type="modified residue" description="Phosphoserine" evidence="1">
    <location>
        <position position="1457"/>
    </location>
</feature>
<protein>
    <recommendedName>
        <fullName evidence="1">AF4/FMR2 family member lilli</fullName>
    </recommendedName>
    <alternativeName>
        <fullName evidence="1">Protein lilliputian</fullName>
    </alternativeName>
</protein>
<organism>
    <name type="scientific">Drosophila mojavensis</name>
    <name type="common">Fruit fly</name>
    <dbReference type="NCBI Taxonomy" id="7230"/>
    <lineage>
        <taxon>Eukaryota</taxon>
        <taxon>Metazoa</taxon>
        <taxon>Ecdysozoa</taxon>
        <taxon>Arthropoda</taxon>
        <taxon>Hexapoda</taxon>
        <taxon>Insecta</taxon>
        <taxon>Pterygota</taxon>
        <taxon>Neoptera</taxon>
        <taxon>Endopterygota</taxon>
        <taxon>Diptera</taxon>
        <taxon>Brachycera</taxon>
        <taxon>Muscomorpha</taxon>
        <taxon>Ephydroidea</taxon>
        <taxon>Drosophilidae</taxon>
        <taxon>Drosophila</taxon>
    </lineage>
</organism>
<reference evidence="4" key="1">
    <citation type="journal article" date="2007" name="Nature">
        <title>Evolution of genes and genomes on the Drosophila phylogeny.</title>
        <authorList>
            <consortium name="Drosophila 12 genomes consortium"/>
        </authorList>
    </citation>
    <scope>NUCLEOTIDE SEQUENCE [LARGE SCALE GENOMIC DNA]</scope>
    <source>
        <strain evidence="4">Tucson 15081-1352.22</strain>
    </source>
</reference>
<dbReference type="EMBL" id="CH933807">
    <property type="protein sequence ID" value="EDW12041.1"/>
    <property type="molecule type" value="Genomic_DNA"/>
</dbReference>
<dbReference type="RefSeq" id="XP_002002599.2">
    <property type="nucleotide sequence ID" value="XM_002002563.2"/>
</dbReference>
<dbReference type="SMR" id="B4KFE1"/>
<dbReference type="FunCoup" id="B4KFE1">
    <property type="interactions" value="248"/>
</dbReference>
<dbReference type="KEGG" id="dmo:Dmoj_GI11857"/>
<dbReference type="eggNOG" id="ENOG502QR32">
    <property type="taxonomic scope" value="Eukaryota"/>
</dbReference>
<dbReference type="HOGENOM" id="CLU_241798_0_0_1"/>
<dbReference type="InParanoid" id="B4KFE1"/>
<dbReference type="OMA" id="NMEATWT"/>
<dbReference type="OrthoDB" id="6382204at2759"/>
<dbReference type="PhylomeDB" id="B4KFE1"/>
<dbReference type="ChiTaRS" id="lilli">
    <property type="organism name" value="fly"/>
</dbReference>
<dbReference type="Proteomes" id="UP000009192">
    <property type="component" value="Unassembled WGS sequence"/>
</dbReference>
<dbReference type="GO" id="GO:0005634">
    <property type="term" value="C:nucleus"/>
    <property type="evidence" value="ECO:0000250"/>
    <property type="project" value="UniProtKB"/>
</dbReference>
<dbReference type="GO" id="GO:0032783">
    <property type="term" value="C:super elongation complex"/>
    <property type="evidence" value="ECO:0007669"/>
    <property type="project" value="TreeGrafter"/>
</dbReference>
<dbReference type="GO" id="GO:0003677">
    <property type="term" value="F:DNA binding"/>
    <property type="evidence" value="ECO:0007669"/>
    <property type="project" value="UniProtKB-KW"/>
</dbReference>
<dbReference type="GO" id="GO:0003712">
    <property type="term" value="F:transcription coregulator activity"/>
    <property type="evidence" value="ECO:0000250"/>
    <property type="project" value="UniProtKB"/>
</dbReference>
<dbReference type="GO" id="GO:0007366">
    <property type="term" value="P:periodic partitioning by pair rule gene"/>
    <property type="evidence" value="ECO:0000250"/>
    <property type="project" value="UniProtKB"/>
</dbReference>
<dbReference type="GO" id="GO:0051493">
    <property type="term" value="P:regulation of cytoskeleton organization"/>
    <property type="evidence" value="ECO:0000250"/>
    <property type="project" value="UniProtKB"/>
</dbReference>
<dbReference type="GO" id="GO:0006355">
    <property type="term" value="P:regulation of DNA-templated transcription"/>
    <property type="evidence" value="ECO:0000250"/>
    <property type="project" value="UniProtKB"/>
</dbReference>
<dbReference type="GO" id="GO:0032368">
    <property type="term" value="P:regulation of lipid transport"/>
    <property type="evidence" value="ECO:0000250"/>
    <property type="project" value="UniProtKB"/>
</dbReference>
<dbReference type="InterPro" id="IPR007797">
    <property type="entry name" value="AF4/FMR2"/>
</dbReference>
<dbReference type="InterPro" id="IPR043640">
    <property type="entry name" value="AF4/FMR2_CHD"/>
</dbReference>
<dbReference type="InterPro" id="IPR000637">
    <property type="entry name" value="HMGI/Y_DNA-bd_CS"/>
</dbReference>
<dbReference type="PANTHER" id="PTHR10528">
    <property type="entry name" value="AF4/FMR2 FAMILY MEMBER"/>
    <property type="match status" value="1"/>
</dbReference>
<dbReference type="PANTHER" id="PTHR10528:SF17">
    <property type="entry name" value="AF4_FMR2 FAMILY MEMBER LILLI"/>
    <property type="match status" value="1"/>
</dbReference>
<dbReference type="Pfam" id="PF18876">
    <property type="entry name" value="AFF4_CHD"/>
    <property type="match status" value="1"/>
</dbReference>
<dbReference type="PROSITE" id="PS00354">
    <property type="entry name" value="HMGI_Y"/>
    <property type="match status" value="1"/>
</dbReference>